<keyword id="KW-0903">Direct protein sequencing</keyword>
<keyword id="KW-0378">Hydrolase</keyword>
<keyword id="KW-1185">Reference proteome</keyword>
<organism>
    <name type="scientific">Populus euphratica</name>
    <name type="common">Euphrates poplar</name>
    <dbReference type="NCBI Taxonomy" id="75702"/>
    <lineage>
        <taxon>Eukaryota</taxon>
        <taxon>Viridiplantae</taxon>
        <taxon>Streptophyta</taxon>
        <taxon>Embryophyta</taxon>
        <taxon>Tracheophyta</taxon>
        <taxon>Spermatophyta</taxon>
        <taxon>Magnoliopsida</taxon>
        <taxon>eudicotyledons</taxon>
        <taxon>Gunneridae</taxon>
        <taxon>Pentapetalae</taxon>
        <taxon>rosids</taxon>
        <taxon>fabids</taxon>
        <taxon>Malpighiales</taxon>
        <taxon>Salicaceae</taxon>
        <taxon>Saliceae</taxon>
        <taxon>Populus</taxon>
    </lineage>
</organism>
<comment type="similarity">
    <text evidence="3">Belongs to the 'GDSL' lipolytic enzyme family.</text>
</comment>
<comment type="caution">
    <text evidence="1">The order of the peptides shown is unknown.</text>
</comment>
<feature type="chain" id="PRO_0000304524" description="Putative GDSL-motif lipase/hydrolase-like protein">
    <location>
        <begin position="1" status="less than"/>
        <end position="28" status="greater than"/>
    </location>
</feature>
<feature type="non-consecutive residues" evidence="2">
    <location>
        <begin position="16"/>
        <end position="17"/>
    </location>
</feature>
<feature type="non-terminal residue" evidence="2">
    <location>
        <position position="1"/>
    </location>
</feature>
<feature type="non-terminal residue" evidence="2">
    <location>
        <position position="28"/>
    </location>
</feature>
<protein>
    <recommendedName>
        <fullName>Putative GDSL-motif lipase/hydrolase-like protein</fullName>
        <ecNumber>3.1.-.-</ecNumber>
    </recommendedName>
</protein>
<accession>P84985</accession>
<proteinExistence type="evidence at protein level"/>
<name>GDSLH_POPEU</name>
<sequence>QSPKDAYPYDISELVKDAYPYDISELVK</sequence>
<dbReference type="EC" id="3.1.-.-"/>
<dbReference type="Proteomes" id="UP000694918">
    <property type="component" value="Unplaced"/>
</dbReference>
<dbReference type="GO" id="GO:0016787">
    <property type="term" value="F:hydrolase activity"/>
    <property type="evidence" value="ECO:0007669"/>
    <property type="project" value="UniProtKB-KW"/>
</dbReference>
<evidence type="ECO:0000269" key="1">
    <source ref="1"/>
</evidence>
<evidence type="ECO:0000303" key="2">
    <source ref="1"/>
</evidence>
<evidence type="ECO:0000305" key="3"/>
<reference evidence="3" key="1">
    <citation type="thesis" date="2006" institute="ICAT-FCUL" country="Portugal">
        <title>Molecular analysis of Populus euphratica Oliv. response to moderate heat stress.</title>
        <authorList>
            <person name="Ferreira S."/>
        </authorList>
    </citation>
    <scope>PROTEIN SEQUENCE</scope>
    <source>
        <tissue evidence="1">Leaf</tissue>
    </source>
</reference>